<dbReference type="EC" id="7.1.2.2" evidence="1"/>
<dbReference type="EMBL" id="CP001358">
    <property type="protein sequence ID" value="ACL50082.1"/>
    <property type="molecule type" value="Genomic_DNA"/>
</dbReference>
<dbReference type="SMR" id="B8J437"/>
<dbReference type="STRING" id="525146.Ddes_2186"/>
<dbReference type="KEGG" id="dds:Ddes_2186"/>
<dbReference type="eggNOG" id="COG0056">
    <property type="taxonomic scope" value="Bacteria"/>
</dbReference>
<dbReference type="HOGENOM" id="CLU_010091_2_1_7"/>
<dbReference type="GO" id="GO:0005886">
    <property type="term" value="C:plasma membrane"/>
    <property type="evidence" value="ECO:0007669"/>
    <property type="project" value="UniProtKB-SubCell"/>
</dbReference>
<dbReference type="GO" id="GO:0045259">
    <property type="term" value="C:proton-transporting ATP synthase complex"/>
    <property type="evidence" value="ECO:0007669"/>
    <property type="project" value="UniProtKB-KW"/>
</dbReference>
<dbReference type="GO" id="GO:0043531">
    <property type="term" value="F:ADP binding"/>
    <property type="evidence" value="ECO:0007669"/>
    <property type="project" value="TreeGrafter"/>
</dbReference>
<dbReference type="GO" id="GO:0005524">
    <property type="term" value="F:ATP binding"/>
    <property type="evidence" value="ECO:0007669"/>
    <property type="project" value="UniProtKB-UniRule"/>
</dbReference>
<dbReference type="GO" id="GO:0046933">
    <property type="term" value="F:proton-transporting ATP synthase activity, rotational mechanism"/>
    <property type="evidence" value="ECO:0007669"/>
    <property type="project" value="UniProtKB-UniRule"/>
</dbReference>
<dbReference type="CDD" id="cd18113">
    <property type="entry name" value="ATP-synt_F1_alpha_C"/>
    <property type="match status" value="1"/>
</dbReference>
<dbReference type="CDD" id="cd18116">
    <property type="entry name" value="ATP-synt_F1_alpha_N"/>
    <property type="match status" value="1"/>
</dbReference>
<dbReference type="CDD" id="cd01132">
    <property type="entry name" value="F1-ATPase_alpha_CD"/>
    <property type="match status" value="1"/>
</dbReference>
<dbReference type="FunFam" id="1.20.150.20:FF:000001">
    <property type="entry name" value="ATP synthase subunit alpha"/>
    <property type="match status" value="1"/>
</dbReference>
<dbReference type="FunFam" id="2.40.30.20:FF:000001">
    <property type="entry name" value="ATP synthase subunit alpha"/>
    <property type="match status" value="1"/>
</dbReference>
<dbReference type="FunFam" id="3.40.50.300:FF:000002">
    <property type="entry name" value="ATP synthase subunit alpha"/>
    <property type="match status" value="1"/>
</dbReference>
<dbReference type="Gene3D" id="2.40.30.20">
    <property type="match status" value="1"/>
</dbReference>
<dbReference type="Gene3D" id="1.20.150.20">
    <property type="entry name" value="ATP synthase alpha/beta chain, C-terminal domain"/>
    <property type="match status" value="1"/>
</dbReference>
<dbReference type="Gene3D" id="3.40.50.300">
    <property type="entry name" value="P-loop containing nucleotide triphosphate hydrolases"/>
    <property type="match status" value="1"/>
</dbReference>
<dbReference type="HAMAP" id="MF_01346">
    <property type="entry name" value="ATP_synth_alpha_bact"/>
    <property type="match status" value="1"/>
</dbReference>
<dbReference type="InterPro" id="IPR023366">
    <property type="entry name" value="ATP_synth_asu-like_sf"/>
</dbReference>
<dbReference type="InterPro" id="IPR000793">
    <property type="entry name" value="ATP_synth_asu_C"/>
</dbReference>
<dbReference type="InterPro" id="IPR038376">
    <property type="entry name" value="ATP_synth_asu_C_sf"/>
</dbReference>
<dbReference type="InterPro" id="IPR033732">
    <property type="entry name" value="ATP_synth_F1_a_nt-bd_dom"/>
</dbReference>
<dbReference type="InterPro" id="IPR005294">
    <property type="entry name" value="ATP_synth_F1_asu"/>
</dbReference>
<dbReference type="InterPro" id="IPR020003">
    <property type="entry name" value="ATPase_a/bsu_AS"/>
</dbReference>
<dbReference type="InterPro" id="IPR004100">
    <property type="entry name" value="ATPase_F1/V1/A1_a/bsu_N"/>
</dbReference>
<dbReference type="InterPro" id="IPR036121">
    <property type="entry name" value="ATPase_F1/V1/A1_a/bsu_N_sf"/>
</dbReference>
<dbReference type="InterPro" id="IPR000194">
    <property type="entry name" value="ATPase_F1/V1/A1_a/bsu_nucl-bd"/>
</dbReference>
<dbReference type="InterPro" id="IPR027417">
    <property type="entry name" value="P-loop_NTPase"/>
</dbReference>
<dbReference type="NCBIfam" id="TIGR00962">
    <property type="entry name" value="atpA"/>
    <property type="match status" value="1"/>
</dbReference>
<dbReference type="NCBIfam" id="NF009884">
    <property type="entry name" value="PRK13343.1"/>
    <property type="match status" value="1"/>
</dbReference>
<dbReference type="PANTHER" id="PTHR48082">
    <property type="entry name" value="ATP SYNTHASE SUBUNIT ALPHA, MITOCHONDRIAL"/>
    <property type="match status" value="1"/>
</dbReference>
<dbReference type="PANTHER" id="PTHR48082:SF2">
    <property type="entry name" value="ATP SYNTHASE SUBUNIT ALPHA, MITOCHONDRIAL"/>
    <property type="match status" value="1"/>
</dbReference>
<dbReference type="Pfam" id="PF00006">
    <property type="entry name" value="ATP-synt_ab"/>
    <property type="match status" value="1"/>
</dbReference>
<dbReference type="Pfam" id="PF00306">
    <property type="entry name" value="ATP-synt_ab_C"/>
    <property type="match status" value="1"/>
</dbReference>
<dbReference type="Pfam" id="PF02874">
    <property type="entry name" value="ATP-synt_ab_N"/>
    <property type="match status" value="1"/>
</dbReference>
<dbReference type="PIRSF" id="PIRSF039088">
    <property type="entry name" value="F_ATPase_subunit_alpha"/>
    <property type="match status" value="1"/>
</dbReference>
<dbReference type="SUPFAM" id="SSF47917">
    <property type="entry name" value="C-terminal domain of alpha and beta subunits of F1 ATP synthase"/>
    <property type="match status" value="1"/>
</dbReference>
<dbReference type="SUPFAM" id="SSF50615">
    <property type="entry name" value="N-terminal domain of alpha and beta subunits of F1 ATP synthase"/>
    <property type="match status" value="1"/>
</dbReference>
<dbReference type="SUPFAM" id="SSF52540">
    <property type="entry name" value="P-loop containing nucleoside triphosphate hydrolases"/>
    <property type="match status" value="1"/>
</dbReference>
<dbReference type="PROSITE" id="PS00152">
    <property type="entry name" value="ATPASE_ALPHA_BETA"/>
    <property type="match status" value="1"/>
</dbReference>
<gene>
    <name evidence="1" type="primary">atpA</name>
    <name type="ordered locus">Ddes_2186</name>
</gene>
<protein>
    <recommendedName>
        <fullName evidence="1">ATP synthase subunit alpha</fullName>
        <ecNumber evidence="1">7.1.2.2</ecNumber>
    </recommendedName>
    <alternativeName>
        <fullName evidence="1">ATP synthase F1 sector subunit alpha</fullName>
    </alternativeName>
    <alternativeName>
        <fullName evidence="1">F-ATPase subunit alpha</fullName>
    </alternativeName>
</protein>
<comment type="function">
    <text evidence="1">Produces ATP from ADP in the presence of a proton gradient across the membrane. The alpha chain is a regulatory subunit.</text>
</comment>
<comment type="catalytic activity">
    <reaction evidence="1">
        <text>ATP + H2O + 4 H(+)(in) = ADP + phosphate + 5 H(+)(out)</text>
        <dbReference type="Rhea" id="RHEA:57720"/>
        <dbReference type="ChEBI" id="CHEBI:15377"/>
        <dbReference type="ChEBI" id="CHEBI:15378"/>
        <dbReference type="ChEBI" id="CHEBI:30616"/>
        <dbReference type="ChEBI" id="CHEBI:43474"/>
        <dbReference type="ChEBI" id="CHEBI:456216"/>
        <dbReference type="EC" id="7.1.2.2"/>
    </reaction>
</comment>
<comment type="subunit">
    <text evidence="1">F-type ATPases have 2 components, CF(1) - the catalytic core - and CF(0) - the membrane proton channel. CF(1) has five subunits: alpha(3), beta(3), gamma(1), delta(1), epsilon(1). CF(0) has three main subunits: a(1), b(2) and c(9-12). The alpha and beta chains form an alternating ring which encloses part of the gamma chain. CF(1) is attached to CF(0) by a central stalk formed by the gamma and epsilon chains, while a peripheral stalk is formed by the delta and b chains.</text>
</comment>
<comment type="subcellular location">
    <subcellularLocation>
        <location evidence="1">Cell inner membrane</location>
        <topology evidence="1">Peripheral membrane protein</topology>
    </subcellularLocation>
</comment>
<comment type="similarity">
    <text evidence="1">Belongs to the ATPase alpha/beta chains family.</text>
</comment>
<feature type="chain" id="PRO_1000166534" description="ATP synthase subunit alpha">
    <location>
        <begin position="1"/>
        <end position="502"/>
    </location>
</feature>
<feature type="binding site" evidence="1">
    <location>
        <begin position="169"/>
        <end position="176"/>
    </location>
    <ligand>
        <name>ATP</name>
        <dbReference type="ChEBI" id="CHEBI:30616"/>
    </ligand>
</feature>
<feature type="site" description="Required for activity" evidence="1">
    <location>
        <position position="362"/>
    </location>
</feature>
<reference key="1">
    <citation type="submission" date="2009-01" db="EMBL/GenBank/DDBJ databases">
        <title>Complete sequence of Desulfovibrio desulfuricans subsp. desulfuricans str. ATCC 27774.</title>
        <authorList>
            <consortium name="US DOE Joint Genome Institute"/>
            <person name="Lucas S."/>
            <person name="Copeland A."/>
            <person name="Lapidus A."/>
            <person name="Glavina del Rio T."/>
            <person name="Tice H."/>
            <person name="Bruce D."/>
            <person name="Goodwin L."/>
            <person name="Pitluck S."/>
            <person name="Sims D."/>
            <person name="Lu M."/>
            <person name="Kiss H."/>
            <person name="Meineke L."/>
            <person name="Brettin T."/>
            <person name="Detter J.C."/>
            <person name="Han C."/>
            <person name="Larimer F."/>
            <person name="Land M."/>
            <person name="Hauser L."/>
            <person name="Kyrpides N."/>
            <person name="Ovchinnikova G."/>
            <person name="Hazen T.C."/>
        </authorList>
    </citation>
    <scope>NUCLEOTIDE SEQUENCE [LARGE SCALE GENOMIC DNA]</scope>
    <source>
        <strain>ATCC 27774 / DSM 6949 / MB</strain>
    </source>
</reference>
<accession>B8J437</accession>
<sequence length="502" mass="54327">MQIKAEEISKIIEDQIQNYEQRVEMSETGTVLYVGDGIARVYGVQNAMSMELLEFPGGIMGMVLNLEEDNVGVALLGSDVGIKEGDPVKRTGKIFSVPVGDGVMGRVLNPLGEPIDGLGPIDAAEVRPVEIKAPGIIARKSVHEPMPTGLKAIDAMTPIGRGQRELIIGDRQTGKTAVCLDAILAQKETGIHCFYVAIGQKKSSVALVADTLRRHGALEYTTIISATASDPAPLQYIAAYTGCTMAEYYRDSGKHALIIYDDLSKQAVAYRQMSLLLRRPPGREAFPGDVFYLHSRLLERAAKVNDSLGAGSLTALPIIETQAGDVSAYIPTNVISITDGQVYLEPNLFNAGVRPAINVGLSVSRVGGAAQIKAMKQVAGTMRLDLAQYRELAAFAQFGSDLDKGTKAKLDRGARLVELLKQPQYQPMPSNEQVASIYAATRGHMDDVPVEDIRRFEAALLTFLRDTRKDVLDAIKEKQVIDEAVEKALTEAIAAFKQGWTA</sequence>
<proteinExistence type="inferred from homology"/>
<organism>
    <name type="scientific">Desulfovibrio desulfuricans (strain ATCC 27774 / DSM 6949 / MB)</name>
    <dbReference type="NCBI Taxonomy" id="525146"/>
    <lineage>
        <taxon>Bacteria</taxon>
        <taxon>Pseudomonadati</taxon>
        <taxon>Thermodesulfobacteriota</taxon>
        <taxon>Desulfovibrionia</taxon>
        <taxon>Desulfovibrionales</taxon>
        <taxon>Desulfovibrionaceae</taxon>
        <taxon>Desulfovibrio</taxon>
    </lineage>
</organism>
<evidence type="ECO:0000255" key="1">
    <source>
        <dbReference type="HAMAP-Rule" id="MF_01346"/>
    </source>
</evidence>
<keyword id="KW-0066">ATP synthesis</keyword>
<keyword id="KW-0067">ATP-binding</keyword>
<keyword id="KW-0997">Cell inner membrane</keyword>
<keyword id="KW-1003">Cell membrane</keyword>
<keyword id="KW-0139">CF(1)</keyword>
<keyword id="KW-0375">Hydrogen ion transport</keyword>
<keyword id="KW-0406">Ion transport</keyword>
<keyword id="KW-0472">Membrane</keyword>
<keyword id="KW-0547">Nucleotide-binding</keyword>
<keyword id="KW-1278">Translocase</keyword>
<keyword id="KW-0813">Transport</keyword>
<name>ATPA_DESDA</name>